<protein>
    <recommendedName>
        <fullName evidence="1">Alanine racemase</fullName>
        <ecNumber evidence="1">5.1.1.1</ecNumber>
    </recommendedName>
</protein>
<sequence>MRPLNVQIRLGNLRHNYQILKEMHGGKLLAVVKADAYGHGAVRCAFALADLADGFAVATIDEGIRLRESGITHPIVLLEGVFEASEYEAVEQYSLWPAVGNQWQLEALLIRHWKKPVKVWLKMDSGMHRTGFFPHDYASAYAALKQSEYVDSIVKFSHFSCADEPESGMTEIQMEAFDLGTEGLEGEESLANSAAILNVPEARRDWGRAGLALYGISPFGGSDDRLKPVMRLSTRIFGERVLQPHSPIGYGATFYTSKSTRVGLIACGYADGYPRRAPSNSPVAVDGKLTRVIGRVSMDMMTIELDASQEGLGHEVELWGDTVNINTVAEAAGTIPYELMCNIKRAKFTYIE</sequence>
<dbReference type="EC" id="5.1.1.1" evidence="1"/>
<dbReference type="EMBL" id="AM421808">
    <property type="protein sequence ID" value="CAM10760.1"/>
    <property type="molecule type" value="Genomic_DNA"/>
</dbReference>
<dbReference type="RefSeq" id="WP_002220250.1">
    <property type="nucleotide sequence ID" value="NC_008767.1"/>
</dbReference>
<dbReference type="SMR" id="A1KV59"/>
<dbReference type="KEGG" id="nmc:NMC1567"/>
<dbReference type="HOGENOM" id="CLU_028393_1_0_4"/>
<dbReference type="UniPathway" id="UPA00042">
    <property type="reaction ID" value="UER00497"/>
</dbReference>
<dbReference type="Proteomes" id="UP000002286">
    <property type="component" value="Chromosome"/>
</dbReference>
<dbReference type="GO" id="GO:0005829">
    <property type="term" value="C:cytosol"/>
    <property type="evidence" value="ECO:0007669"/>
    <property type="project" value="TreeGrafter"/>
</dbReference>
<dbReference type="GO" id="GO:0008784">
    <property type="term" value="F:alanine racemase activity"/>
    <property type="evidence" value="ECO:0007669"/>
    <property type="project" value="UniProtKB-UniRule"/>
</dbReference>
<dbReference type="GO" id="GO:0030170">
    <property type="term" value="F:pyridoxal phosphate binding"/>
    <property type="evidence" value="ECO:0007669"/>
    <property type="project" value="UniProtKB-UniRule"/>
</dbReference>
<dbReference type="GO" id="GO:0030632">
    <property type="term" value="P:D-alanine biosynthetic process"/>
    <property type="evidence" value="ECO:0007669"/>
    <property type="project" value="UniProtKB-UniRule"/>
</dbReference>
<dbReference type="CDD" id="cd06827">
    <property type="entry name" value="PLPDE_III_AR_proteobact"/>
    <property type="match status" value="1"/>
</dbReference>
<dbReference type="FunFam" id="3.20.20.10:FF:000002">
    <property type="entry name" value="Alanine racemase"/>
    <property type="match status" value="1"/>
</dbReference>
<dbReference type="Gene3D" id="3.20.20.10">
    <property type="entry name" value="Alanine racemase"/>
    <property type="match status" value="1"/>
</dbReference>
<dbReference type="Gene3D" id="2.40.37.10">
    <property type="entry name" value="Lyase, Ornithine Decarboxylase, Chain A, domain 1"/>
    <property type="match status" value="1"/>
</dbReference>
<dbReference type="HAMAP" id="MF_01201">
    <property type="entry name" value="Ala_racemase"/>
    <property type="match status" value="1"/>
</dbReference>
<dbReference type="InterPro" id="IPR000821">
    <property type="entry name" value="Ala_racemase"/>
</dbReference>
<dbReference type="InterPro" id="IPR009006">
    <property type="entry name" value="Ala_racemase/Decarboxylase_C"/>
</dbReference>
<dbReference type="InterPro" id="IPR011079">
    <property type="entry name" value="Ala_racemase_C"/>
</dbReference>
<dbReference type="InterPro" id="IPR001608">
    <property type="entry name" value="Ala_racemase_N"/>
</dbReference>
<dbReference type="InterPro" id="IPR020622">
    <property type="entry name" value="Ala_racemase_pyridoxalP-BS"/>
</dbReference>
<dbReference type="InterPro" id="IPR029066">
    <property type="entry name" value="PLP-binding_barrel"/>
</dbReference>
<dbReference type="NCBIfam" id="TIGR00492">
    <property type="entry name" value="alr"/>
    <property type="match status" value="1"/>
</dbReference>
<dbReference type="PANTHER" id="PTHR30511">
    <property type="entry name" value="ALANINE RACEMASE"/>
    <property type="match status" value="1"/>
</dbReference>
<dbReference type="PANTHER" id="PTHR30511:SF0">
    <property type="entry name" value="ALANINE RACEMASE, CATABOLIC-RELATED"/>
    <property type="match status" value="1"/>
</dbReference>
<dbReference type="Pfam" id="PF00842">
    <property type="entry name" value="Ala_racemase_C"/>
    <property type="match status" value="1"/>
</dbReference>
<dbReference type="Pfam" id="PF01168">
    <property type="entry name" value="Ala_racemase_N"/>
    <property type="match status" value="1"/>
</dbReference>
<dbReference type="PRINTS" id="PR00992">
    <property type="entry name" value="ALARACEMASE"/>
</dbReference>
<dbReference type="SMART" id="SM01005">
    <property type="entry name" value="Ala_racemase_C"/>
    <property type="match status" value="1"/>
</dbReference>
<dbReference type="SUPFAM" id="SSF50621">
    <property type="entry name" value="Alanine racemase C-terminal domain-like"/>
    <property type="match status" value="1"/>
</dbReference>
<dbReference type="SUPFAM" id="SSF51419">
    <property type="entry name" value="PLP-binding barrel"/>
    <property type="match status" value="1"/>
</dbReference>
<dbReference type="PROSITE" id="PS00395">
    <property type="entry name" value="ALANINE_RACEMASE"/>
    <property type="match status" value="1"/>
</dbReference>
<name>ALR_NEIMF</name>
<evidence type="ECO:0000255" key="1">
    <source>
        <dbReference type="HAMAP-Rule" id="MF_01201"/>
    </source>
</evidence>
<organism>
    <name type="scientific">Neisseria meningitidis serogroup C / serotype 2a (strain ATCC 700532 / DSM 15464 / FAM18)</name>
    <dbReference type="NCBI Taxonomy" id="272831"/>
    <lineage>
        <taxon>Bacteria</taxon>
        <taxon>Pseudomonadati</taxon>
        <taxon>Pseudomonadota</taxon>
        <taxon>Betaproteobacteria</taxon>
        <taxon>Neisseriales</taxon>
        <taxon>Neisseriaceae</taxon>
        <taxon>Neisseria</taxon>
    </lineage>
</organism>
<reference key="1">
    <citation type="journal article" date="2007" name="PLoS Genet.">
        <title>Meningococcal genetic variation mechanisms viewed through comparative analysis of serogroup C strain FAM18.</title>
        <authorList>
            <person name="Bentley S.D."/>
            <person name="Vernikos G.S."/>
            <person name="Snyder L.A.S."/>
            <person name="Churcher C."/>
            <person name="Arrowsmith C."/>
            <person name="Chillingworth T."/>
            <person name="Cronin A."/>
            <person name="Davis P.H."/>
            <person name="Holroyd N.E."/>
            <person name="Jagels K."/>
            <person name="Maddison M."/>
            <person name="Moule S."/>
            <person name="Rabbinowitsch E."/>
            <person name="Sharp S."/>
            <person name="Unwin L."/>
            <person name="Whitehead S."/>
            <person name="Quail M.A."/>
            <person name="Achtman M."/>
            <person name="Barrell B.G."/>
            <person name="Saunders N.J."/>
            <person name="Parkhill J."/>
        </authorList>
    </citation>
    <scope>NUCLEOTIDE SEQUENCE [LARGE SCALE GENOMIC DNA]</scope>
    <source>
        <strain>ATCC 700532 / DSM 15464 / FAM18</strain>
    </source>
</reference>
<keyword id="KW-0413">Isomerase</keyword>
<keyword id="KW-0663">Pyridoxal phosphate</keyword>
<gene>
    <name type="primary">alr</name>
    <name type="ordered locus">NMC1567</name>
</gene>
<feature type="chain" id="PRO_1000066016" description="Alanine racemase">
    <location>
        <begin position="1"/>
        <end position="352"/>
    </location>
</feature>
<feature type="active site" description="Proton acceptor; specific for D-alanine" evidence="1">
    <location>
        <position position="33"/>
    </location>
</feature>
<feature type="active site" description="Proton acceptor; specific for L-alanine" evidence="1">
    <location>
        <position position="250"/>
    </location>
</feature>
<feature type="binding site" evidence="1">
    <location>
        <position position="129"/>
    </location>
    <ligand>
        <name>substrate</name>
    </ligand>
</feature>
<feature type="binding site" evidence="1">
    <location>
        <position position="298"/>
    </location>
    <ligand>
        <name>substrate</name>
    </ligand>
</feature>
<feature type="modified residue" description="N6-(pyridoxal phosphate)lysine" evidence="1">
    <location>
        <position position="33"/>
    </location>
</feature>
<proteinExistence type="inferred from homology"/>
<accession>A1KV59</accession>
<comment type="function">
    <text evidence="1">Catalyzes the interconversion of L-alanine and D-alanine. May also act on other amino acids.</text>
</comment>
<comment type="catalytic activity">
    <reaction evidence="1">
        <text>L-alanine = D-alanine</text>
        <dbReference type="Rhea" id="RHEA:20249"/>
        <dbReference type="ChEBI" id="CHEBI:57416"/>
        <dbReference type="ChEBI" id="CHEBI:57972"/>
        <dbReference type="EC" id="5.1.1.1"/>
    </reaction>
</comment>
<comment type="cofactor">
    <cofactor evidence="1">
        <name>pyridoxal 5'-phosphate</name>
        <dbReference type="ChEBI" id="CHEBI:597326"/>
    </cofactor>
</comment>
<comment type="pathway">
    <text evidence="1">Amino-acid biosynthesis; D-alanine biosynthesis; D-alanine from L-alanine: step 1/1.</text>
</comment>
<comment type="similarity">
    <text evidence="1">Belongs to the alanine racemase family.</text>
</comment>